<comment type="subunit">
    <text evidence="1">Part of the 30S ribosomal subunit.</text>
</comment>
<comment type="subcellular location">
    <subcellularLocation>
        <location>Plastid</location>
        <location>Chloroplast</location>
    </subcellularLocation>
</comment>
<comment type="similarity">
    <text evidence="2">Belongs to the universal ribosomal protein uS3 family.</text>
</comment>
<evidence type="ECO:0000250" key="1"/>
<evidence type="ECO:0000305" key="2"/>
<gene>
    <name type="primary">rps3</name>
    <name type="ordered locus">CsCp080</name>
</gene>
<dbReference type="EMBL" id="DQ119058">
    <property type="protein sequence ID" value="AAZ94688.1"/>
    <property type="molecule type" value="Genomic_DNA"/>
</dbReference>
<dbReference type="EMBL" id="AJ970307">
    <property type="protein sequence ID" value="CAJ00797.1"/>
    <property type="molecule type" value="Genomic_DNA"/>
</dbReference>
<dbReference type="EMBL" id="DQ865975">
    <property type="protein sequence ID" value="ABI97455.1"/>
    <property type="molecule type" value="Genomic_DNA"/>
</dbReference>
<dbReference type="EMBL" id="DQ865976">
    <property type="protein sequence ID" value="ABI98784.1"/>
    <property type="molecule type" value="Genomic_DNA"/>
</dbReference>
<dbReference type="RefSeq" id="YP_247638.1">
    <property type="nucleotide sequence ID" value="NC_007144.1"/>
</dbReference>
<dbReference type="SMR" id="Q4VZN0"/>
<dbReference type="GeneID" id="3429314"/>
<dbReference type="KEGG" id="csv:3429314"/>
<dbReference type="OrthoDB" id="1842609at2759"/>
<dbReference type="GO" id="GO:0009507">
    <property type="term" value="C:chloroplast"/>
    <property type="evidence" value="ECO:0007669"/>
    <property type="project" value="UniProtKB-SubCell"/>
</dbReference>
<dbReference type="GO" id="GO:1990904">
    <property type="term" value="C:ribonucleoprotein complex"/>
    <property type="evidence" value="ECO:0007669"/>
    <property type="project" value="UniProtKB-KW"/>
</dbReference>
<dbReference type="GO" id="GO:0005840">
    <property type="term" value="C:ribosome"/>
    <property type="evidence" value="ECO:0007669"/>
    <property type="project" value="UniProtKB-KW"/>
</dbReference>
<dbReference type="GO" id="GO:0019843">
    <property type="term" value="F:rRNA binding"/>
    <property type="evidence" value="ECO:0007669"/>
    <property type="project" value="UniProtKB-UniRule"/>
</dbReference>
<dbReference type="GO" id="GO:0003735">
    <property type="term" value="F:structural constituent of ribosome"/>
    <property type="evidence" value="ECO:0007669"/>
    <property type="project" value="InterPro"/>
</dbReference>
<dbReference type="GO" id="GO:0006412">
    <property type="term" value="P:translation"/>
    <property type="evidence" value="ECO:0007669"/>
    <property type="project" value="UniProtKB-UniRule"/>
</dbReference>
<dbReference type="CDD" id="cd02412">
    <property type="entry name" value="KH-II_30S_S3"/>
    <property type="match status" value="1"/>
</dbReference>
<dbReference type="FunFam" id="3.30.1140.32:FF:000003">
    <property type="entry name" value="30S ribosomal protein S3, chloroplastic"/>
    <property type="match status" value="1"/>
</dbReference>
<dbReference type="FunFam" id="3.30.300.20:FF:000008">
    <property type="entry name" value="30S ribosomal protein S3, chloroplastic"/>
    <property type="match status" value="1"/>
</dbReference>
<dbReference type="Gene3D" id="3.30.300.20">
    <property type="match status" value="1"/>
</dbReference>
<dbReference type="Gene3D" id="3.30.1140.32">
    <property type="entry name" value="Ribosomal protein S3, C-terminal domain"/>
    <property type="match status" value="1"/>
</dbReference>
<dbReference type="HAMAP" id="MF_01309_B">
    <property type="entry name" value="Ribosomal_uS3_B"/>
    <property type="match status" value="1"/>
</dbReference>
<dbReference type="InterPro" id="IPR015946">
    <property type="entry name" value="KH_dom-like_a/b"/>
</dbReference>
<dbReference type="InterPro" id="IPR004044">
    <property type="entry name" value="KH_dom_type_2"/>
</dbReference>
<dbReference type="InterPro" id="IPR009019">
    <property type="entry name" value="KH_sf_prok-type"/>
</dbReference>
<dbReference type="InterPro" id="IPR036419">
    <property type="entry name" value="Ribosomal_S3_C_sf"/>
</dbReference>
<dbReference type="InterPro" id="IPR005704">
    <property type="entry name" value="Ribosomal_uS3_bac-typ"/>
</dbReference>
<dbReference type="InterPro" id="IPR001351">
    <property type="entry name" value="Ribosomal_uS3_C"/>
</dbReference>
<dbReference type="InterPro" id="IPR018280">
    <property type="entry name" value="Ribosomal_uS3_CS"/>
</dbReference>
<dbReference type="NCBIfam" id="TIGR01009">
    <property type="entry name" value="rpsC_bact"/>
    <property type="match status" value="1"/>
</dbReference>
<dbReference type="PANTHER" id="PTHR11760">
    <property type="entry name" value="30S/40S RIBOSOMAL PROTEIN S3"/>
    <property type="match status" value="1"/>
</dbReference>
<dbReference type="PANTHER" id="PTHR11760:SF19">
    <property type="entry name" value="SMALL RIBOSOMAL SUBUNIT PROTEIN US3C"/>
    <property type="match status" value="1"/>
</dbReference>
<dbReference type="Pfam" id="PF00189">
    <property type="entry name" value="Ribosomal_S3_C"/>
    <property type="match status" value="1"/>
</dbReference>
<dbReference type="SUPFAM" id="SSF54814">
    <property type="entry name" value="Prokaryotic type KH domain (KH-domain type II)"/>
    <property type="match status" value="1"/>
</dbReference>
<dbReference type="SUPFAM" id="SSF54821">
    <property type="entry name" value="Ribosomal protein S3 C-terminal domain"/>
    <property type="match status" value="1"/>
</dbReference>
<dbReference type="PROSITE" id="PS50823">
    <property type="entry name" value="KH_TYPE_2"/>
    <property type="match status" value="1"/>
</dbReference>
<dbReference type="PROSITE" id="PS00548">
    <property type="entry name" value="RIBOSOMAL_S3"/>
    <property type="match status" value="1"/>
</dbReference>
<protein>
    <recommendedName>
        <fullName evidence="2">Small ribosomal subunit protein uS3c</fullName>
    </recommendedName>
    <alternativeName>
        <fullName>30S ribosomal protein S3, chloroplastic</fullName>
    </alternativeName>
</protein>
<keyword id="KW-0150">Chloroplast</keyword>
<keyword id="KW-0934">Plastid</keyword>
<keyword id="KW-0687">Ribonucleoprotein</keyword>
<keyword id="KW-0689">Ribosomal protein</keyword>
<keyword id="KW-0694">RNA-binding</keyword>
<keyword id="KW-0699">rRNA-binding</keyword>
<accession>Q4VZN0</accession>
<accession>A5J1X3</accession>
<reference key="1">
    <citation type="journal article" date="2006" name="Plant Cell Rep.">
        <title>Complete sequence and organization of the cucumber (Cucumis sativus L. cv. Baekmibaekdadagi) chloroplast genome.</title>
        <authorList>
            <person name="Kim J.-S."/>
            <person name="Jung J.D."/>
            <person name="Lee J.-A."/>
            <person name="Park H.-W."/>
            <person name="Oh K.-H."/>
            <person name="Jeong W.J."/>
            <person name="Choi D.-W."/>
            <person name="Liu J.R."/>
            <person name="Cho K.Y."/>
        </authorList>
    </citation>
    <scope>NUCLEOTIDE SEQUENCE [LARGE SCALE GENOMIC DNA]</scope>
    <source>
        <strain>cv. Baekmibaekdadagi</strain>
    </source>
</reference>
<reference key="2">
    <citation type="journal article" date="2007" name="Cell. Mol. Biol. Lett.">
        <title>The complete structure of the cucumber (Cucumis sativus L.) chloroplast genome: its composition and comparative analysis.</title>
        <authorList>
            <person name="Plader W.W."/>
            <person name="Yukawa Y."/>
            <person name="Sugiura M."/>
            <person name="Malepszy S."/>
        </authorList>
    </citation>
    <scope>NUCLEOTIDE SEQUENCE [LARGE SCALE GENOMIC DNA]</scope>
    <source>
        <strain>cv. Borszczagowski</strain>
    </source>
</reference>
<reference key="3">
    <citation type="journal article" date="2007" name="Genome">
        <title>Sequencing cucumber (Cucumis sativus L.) chloroplast genomes identifies differences between chilling-tolerant and -susceptible cucumber lines.</title>
        <authorList>
            <person name="Chung S.-M."/>
            <person name="Gordon V.S."/>
            <person name="Staub J.E."/>
        </authorList>
    </citation>
    <scope>NUCLEOTIDE SEQUENCE [LARGE SCALE GENOMIC DNA]</scope>
    <source>
        <strain>cv. Chipper</strain>
        <strain>cv. Gy14</strain>
    </source>
</reference>
<organism>
    <name type="scientific">Cucumis sativus</name>
    <name type="common">Cucumber</name>
    <dbReference type="NCBI Taxonomy" id="3659"/>
    <lineage>
        <taxon>Eukaryota</taxon>
        <taxon>Viridiplantae</taxon>
        <taxon>Streptophyta</taxon>
        <taxon>Embryophyta</taxon>
        <taxon>Tracheophyta</taxon>
        <taxon>Spermatophyta</taxon>
        <taxon>Magnoliopsida</taxon>
        <taxon>eudicotyledons</taxon>
        <taxon>Gunneridae</taxon>
        <taxon>Pentapetalae</taxon>
        <taxon>rosids</taxon>
        <taxon>fabids</taxon>
        <taxon>Cucurbitales</taxon>
        <taxon>Cucurbitaceae</taxon>
        <taxon>Benincaseae</taxon>
        <taxon>Cucumis</taxon>
    </lineage>
</organism>
<feature type="chain" id="PRO_0000230748" description="Small ribosomal subunit protein uS3c">
    <location>
        <begin position="1"/>
        <end position="218"/>
    </location>
</feature>
<feature type="domain" description="KH type-2">
    <location>
        <begin position="47"/>
        <end position="118"/>
    </location>
</feature>
<proteinExistence type="inferred from homology"/>
<sequence>MGQKINPLGFRLGATQGHHSLWFAHPKKYSEGLQEDQKIRDCIQNYVQKNMRIFSGVEGIARIEIQKRIDLIQVIIFMGFPKLVIDDGSRKIEELQINVQKEFNSGNRKLNIAITRIGNPYGHPNILAEFIAGQLKNRVSFRKAMKKAIELTEQAGTKGIQVQIAGRIDGKEIARVEWIREGRVPLQTIRAKIDYCCYPVRTIYGILGIKIWIFVDEQ</sequence>
<geneLocation type="chloroplast"/>
<name>RR3_CUCSA</name>